<dbReference type="EMBL" id="BC123588">
    <property type="protein sequence ID" value="AAI23589.1"/>
    <property type="molecule type" value="mRNA"/>
</dbReference>
<dbReference type="RefSeq" id="NP_001068888.1">
    <property type="nucleotide sequence ID" value="NM_001075420.2"/>
</dbReference>
<dbReference type="RefSeq" id="XP_010799706.1">
    <property type="nucleotide sequence ID" value="XM_010801404.2"/>
</dbReference>
<dbReference type="SMR" id="Q08DS5"/>
<dbReference type="FunCoup" id="Q08DS5">
    <property type="interactions" value="3389"/>
</dbReference>
<dbReference type="STRING" id="9913.ENSBTAP00000021594"/>
<dbReference type="PaxDb" id="9913-ENSBTAP00000021594"/>
<dbReference type="GeneID" id="509871"/>
<dbReference type="KEGG" id="bta:509871"/>
<dbReference type="CTD" id="51068"/>
<dbReference type="VEuPathDB" id="HostDB:ENSBTAG00000016228"/>
<dbReference type="eggNOG" id="KOG2613">
    <property type="taxonomic scope" value="Eukaryota"/>
</dbReference>
<dbReference type="HOGENOM" id="CLU_027444_2_0_1"/>
<dbReference type="InParanoid" id="Q08DS5"/>
<dbReference type="OMA" id="VILVRKH"/>
<dbReference type="OrthoDB" id="203821at2759"/>
<dbReference type="TreeFam" id="TF105744"/>
<dbReference type="Proteomes" id="UP000009136">
    <property type="component" value="Chromosome 1"/>
</dbReference>
<dbReference type="Bgee" id="ENSBTAG00000016228">
    <property type="expression patterns" value="Expressed in oocyte and 105 other cell types or tissues"/>
</dbReference>
<dbReference type="GO" id="GO:0005737">
    <property type="term" value="C:cytoplasm"/>
    <property type="evidence" value="ECO:0000318"/>
    <property type="project" value="GO_Central"/>
</dbReference>
<dbReference type="GO" id="GO:0005634">
    <property type="term" value="C:nucleus"/>
    <property type="evidence" value="ECO:0000318"/>
    <property type="project" value="GO_Central"/>
</dbReference>
<dbReference type="GO" id="GO:0043023">
    <property type="term" value="F:ribosomal large subunit binding"/>
    <property type="evidence" value="ECO:0000318"/>
    <property type="project" value="GO_Central"/>
</dbReference>
<dbReference type="GO" id="GO:0015031">
    <property type="term" value="P:protein transport"/>
    <property type="evidence" value="ECO:0007669"/>
    <property type="project" value="UniProtKB-KW"/>
</dbReference>
<dbReference type="GO" id="GO:0000055">
    <property type="term" value="P:ribosomal large subunit export from nucleus"/>
    <property type="evidence" value="ECO:0000318"/>
    <property type="project" value="GO_Central"/>
</dbReference>
<dbReference type="InterPro" id="IPR039768">
    <property type="entry name" value="Nmd3"/>
</dbReference>
<dbReference type="InterPro" id="IPR007064">
    <property type="entry name" value="Nmd3_N"/>
</dbReference>
<dbReference type="InterPro" id="IPR048898">
    <property type="entry name" value="NMD3_OB"/>
</dbReference>
<dbReference type="InterPro" id="IPR048899">
    <property type="entry name" value="NMD_SH3"/>
</dbReference>
<dbReference type="PANTHER" id="PTHR12746:SF2">
    <property type="entry name" value="60S RIBOSOMAL EXPORT PROTEIN NMD3"/>
    <property type="match status" value="1"/>
</dbReference>
<dbReference type="PANTHER" id="PTHR12746">
    <property type="entry name" value="NONSENSE-MEDIATED MRNA DECAY PROTEIN 3"/>
    <property type="match status" value="1"/>
</dbReference>
<dbReference type="Pfam" id="PF04981">
    <property type="entry name" value="NMD3"/>
    <property type="match status" value="1"/>
</dbReference>
<dbReference type="Pfam" id="PF21192">
    <property type="entry name" value="NMD3_OB"/>
    <property type="match status" value="1"/>
</dbReference>
<dbReference type="Pfam" id="PF21193">
    <property type="entry name" value="NMD_SH3"/>
    <property type="match status" value="1"/>
</dbReference>
<proteinExistence type="evidence at transcript level"/>
<organism>
    <name type="scientific">Bos taurus</name>
    <name type="common">Bovine</name>
    <dbReference type="NCBI Taxonomy" id="9913"/>
    <lineage>
        <taxon>Eukaryota</taxon>
        <taxon>Metazoa</taxon>
        <taxon>Chordata</taxon>
        <taxon>Craniata</taxon>
        <taxon>Vertebrata</taxon>
        <taxon>Euteleostomi</taxon>
        <taxon>Mammalia</taxon>
        <taxon>Eutheria</taxon>
        <taxon>Laurasiatheria</taxon>
        <taxon>Artiodactyla</taxon>
        <taxon>Ruminantia</taxon>
        <taxon>Pecora</taxon>
        <taxon>Bovidae</taxon>
        <taxon>Bovinae</taxon>
        <taxon>Bos</taxon>
    </lineage>
</organism>
<reference key="1">
    <citation type="submission" date="2006-09" db="EMBL/GenBank/DDBJ databases">
        <authorList>
            <consortium name="NIH - Mammalian Gene Collection (MGC) project"/>
        </authorList>
    </citation>
    <scope>NUCLEOTIDE SEQUENCE [LARGE SCALE MRNA]</scope>
    <source>
        <strain>Hereford</strain>
        <tissue>Fetal medulla</tissue>
    </source>
</reference>
<accession>Q08DS5</accession>
<evidence type="ECO:0000250" key="1">
    <source>
        <dbReference type="UniProtKB" id="Q96D46"/>
    </source>
</evidence>
<evidence type="ECO:0000305" key="2"/>
<keyword id="KW-0007">Acetylation</keyword>
<keyword id="KW-0963">Cytoplasm</keyword>
<keyword id="KW-0539">Nucleus</keyword>
<keyword id="KW-0597">Phosphoprotein</keyword>
<keyword id="KW-0653">Protein transport</keyword>
<keyword id="KW-1185">Reference proteome</keyword>
<keyword id="KW-0813">Transport</keyword>
<gene>
    <name type="primary">NMD3</name>
</gene>
<protein>
    <recommendedName>
        <fullName>60S ribosomal export protein NMD3</fullName>
    </recommendedName>
</protein>
<name>NMD3_BOVIN</name>
<feature type="chain" id="PRO_0000323560" description="60S ribosomal export protein NMD3">
    <location>
        <begin position="1"/>
        <end position="503"/>
    </location>
</feature>
<feature type="region of interest" description="Necessary for the nuclear export of the 60S ribosomal subunit" evidence="1">
    <location>
        <begin position="425"/>
        <end position="503"/>
    </location>
</feature>
<feature type="short sequence motif" description="Nuclear and nucleolar localization signal" evidence="1">
    <location>
        <begin position="405"/>
        <end position="422"/>
    </location>
</feature>
<feature type="short sequence motif" description="Nuclear export signal" evidence="1">
    <location>
        <begin position="480"/>
        <end position="489"/>
    </location>
</feature>
<feature type="modified residue" description="N-acetylmethionine" evidence="1">
    <location>
        <position position="1"/>
    </location>
</feature>
<feature type="modified residue" description="Phosphoserine" evidence="1">
    <location>
        <position position="258"/>
    </location>
</feature>
<feature type="modified residue" description="Phosphothreonine" evidence="1">
    <location>
        <position position="433"/>
    </location>
</feature>
<feature type="modified residue" description="Phosphoserine" evidence="1">
    <location>
        <position position="468"/>
    </location>
</feature>
<feature type="modified residue" description="Phosphothreonine" evidence="1">
    <location>
        <position position="470"/>
    </location>
</feature>
<sequence>MEYMTDPVKHTPGHILCCDCGVPISPNPANICVACLRSKVDISQGIPKQVSISFCKQCQRYFQPPGTWVQCALESRDLLALCLKKIKAPLSKVRLVDASFVWTEPHSKRLKVKLTIQKEVMNGAILQQVFVVDYVVQPQMCGDCHRVEAKDFWKAVVQVRQKTLHKKTFYYLEQLILKYGMHQNTLRIKEIHDGLDFYYSSKQHAQKMVEFLQCTVPTRYKASQRLISQDIHSNTYNYKSTFSVEIVPICKDNVVCLSPKLAQSLGNMNQICVCIRVTSVIHLIDPNTLQVADIDGNTFWSHPFNSLCHPKQLEEFIVMECSIVQDIKRSAGAGMISKKHTLGEVWVQKTSEMNTDKQYFCRTHLGHLLNPGDLVLGFDLVNCNLNDEHVNKMKSDRVPDVVLIKKSYDRTRRQRRRNWKLKELARDRENTDTDDERQYQDFLEDLEEDEAIRKNVNIYRDSTIPVESDTDDEGAPRISLAEMLEDLHISQDATGGEGESMMT</sequence>
<comment type="function">
    <text evidence="1">Acts as an adapter for the XPO1/CRM1-mediated export of the 60S ribosomal subunit.</text>
</comment>
<comment type="subunit">
    <text evidence="1">Found in a 60S ribosomal subunit export complex with RAN and XPO1. Interacts with XPO1. Associates with pre-60S ribosomal particles.</text>
</comment>
<comment type="subcellular location">
    <subcellularLocation>
        <location evidence="1">Cytoplasm</location>
    </subcellularLocation>
    <subcellularLocation>
        <location evidence="1">Nucleus</location>
    </subcellularLocation>
    <text evidence="1">Shuttles between the nucleus/nucleolus and the cytoplasm in a XPO1/CRM1-dependent manner.</text>
</comment>
<comment type="similarity">
    <text evidence="2">Belongs to the NMD3 family.</text>
</comment>